<name>Y3666_EDWI9</name>
<gene>
    <name type="ordered locus">NT01EI_3666</name>
</gene>
<accession>C5B954</accession>
<evidence type="ECO:0000255" key="1">
    <source>
        <dbReference type="HAMAP-Rule" id="MF_00690"/>
    </source>
</evidence>
<dbReference type="EMBL" id="CP001600">
    <property type="protein sequence ID" value="ACR70794.1"/>
    <property type="molecule type" value="Genomic_DNA"/>
</dbReference>
<dbReference type="RefSeq" id="WP_015872833.1">
    <property type="nucleotide sequence ID" value="NZ_CP169062.1"/>
</dbReference>
<dbReference type="SMR" id="C5B954"/>
<dbReference type="STRING" id="67780.B6E78_09975"/>
<dbReference type="KEGG" id="eic:NT01EI_3666"/>
<dbReference type="PATRIC" id="fig|634503.3.peg.3269"/>
<dbReference type="HOGENOM" id="CLU_186759_1_0_6"/>
<dbReference type="OrthoDB" id="6120729at2"/>
<dbReference type="Proteomes" id="UP000001485">
    <property type="component" value="Chromosome"/>
</dbReference>
<dbReference type="Gene3D" id="1.10.10.610">
    <property type="entry name" value="YehU-like"/>
    <property type="match status" value="1"/>
</dbReference>
<dbReference type="HAMAP" id="MF_00690">
    <property type="entry name" value="UPF0270"/>
    <property type="match status" value="1"/>
</dbReference>
<dbReference type="InterPro" id="IPR010648">
    <property type="entry name" value="UPF0270"/>
</dbReference>
<dbReference type="InterPro" id="IPR036685">
    <property type="entry name" value="YehU-like_sf"/>
</dbReference>
<dbReference type="NCBIfam" id="NF003438">
    <property type="entry name" value="PRK04966.1"/>
    <property type="match status" value="1"/>
</dbReference>
<dbReference type="Pfam" id="PF06794">
    <property type="entry name" value="UPF0270"/>
    <property type="match status" value="1"/>
</dbReference>
<dbReference type="PIRSF" id="PIRSF006169">
    <property type="entry name" value="UCP006169"/>
    <property type="match status" value="1"/>
</dbReference>
<dbReference type="SUPFAM" id="SSF118001">
    <property type="entry name" value="YehU-like"/>
    <property type="match status" value="1"/>
</dbReference>
<proteinExistence type="inferred from homology"/>
<organism>
    <name type="scientific">Edwardsiella ictaluri (strain 93-146)</name>
    <dbReference type="NCBI Taxonomy" id="634503"/>
    <lineage>
        <taxon>Bacteria</taxon>
        <taxon>Pseudomonadati</taxon>
        <taxon>Pseudomonadota</taxon>
        <taxon>Gammaproteobacteria</taxon>
        <taxon>Enterobacterales</taxon>
        <taxon>Hafniaceae</taxon>
        <taxon>Edwardsiella</taxon>
    </lineage>
</organism>
<protein>
    <recommendedName>
        <fullName evidence="1">UPF0270 protein NT01EI_3666</fullName>
    </recommendedName>
</protein>
<reference key="1">
    <citation type="submission" date="2009-03" db="EMBL/GenBank/DDBJ databases">
        <title>Complete genome sequence of Edwardsiella ictaluri 93-146.</title>
        <authorList>
            <person name="Williams M.L."/>
            <person name="Gillaspy A.F."/>
            <person name="Dyer D.W."/>
            <person name="Thune R.L."/>
            <person name="Waldbieser G.C."/>
            <person name="Schuster S.C."/>
            <person name="Gipson J."/>
            <person name="Zaitshik J."/>
            <person name="Landry C."/>
            <person name="Lawrence M.L."/>
        </authorList>
    </citation>
    <scope>NUCLEOTIDE SEQUENCE [LARGE SCALE GENOMIC DNA]</scope>
    <source>
        <strain>93-146</strain>
    </source>
</reference>
<feature type="chain" id="PRO_1000212580" description="UPF0270 protein NT01EI_3666">
    <location>
        <begin position="1"/>
        <end position="74"/>
    </location>
</feature>
<sequence>MIIPWQQIAPETLDSLIEAFVLREGTDYGEQERSLTQKVEDVRHQLKCGEAVVVWSELHESVNIMPRSQFNGVD</sequence>
<comment type="similarity">
    <text evidence="1">Belongs to the UPF0270 family.</text>
</comment>